<organism>
    <name type="scientific">Halomonas elongata (strain ATCC 33173 / DSM 2581 / NBRC 15536 / NCIMB 2198 / 1H9)</name>
    <dbReference type="NCBI Taxonomy" id="768066"/>
    <lineage>
        <taxon>Bacteria</taxon>
        <taxon>Pseudomonadati</taxon>
        <taxon>Pseudomonadota</taxon>
        <taxon>Gammaproteobacteria</taxon>
        <taxon>Oceanospirillales</taxon>
        <taxon>Halomonadaceae</taxon>
        <taxon>Halomonas</taxon>
    </lineage>
</organism>
<keyword id="KW-0460">Magnesium</keyword>
<keyword id="KW-0464">Manganese</keyword>
<keyword id="KW-0479">Metal-binding</keyword>
<keyword id="KW-0521">NADP</keyword>
<keyword id="KW-0560">Oxidoreductase</keyword>
<gene>
    <name evidence="3" type="primary">maeB</name>
    <name evidence="5" type="ordered locus">HELO_3763</name>
</gene>
<dbReference type="EC" id="1.1.1.40" evidence="2"/>
<dbReference type="EMBL" id="FN869568">
    <property type="protein sequence ID" value="CBV43647.1"/>
    <property type="molecule type" value="Genomic_DNA"/>
</dbReference>
<dbReference type="RefSeq" id="WP_013333519.1">
    <property type="nucleotide sequence ID" value="NC_014532.2"/>
</dbReference>
<dbReference type="SMR" id="E1V8J1"/>
<dbReference type="STRING" id="768066.HELO_3763"/>
<dbReference type="GeneID" id="91011164"/>
<dbReference type="KEGG" id="hel:HELO_3763"/>
<dbReference type="eggNOG" id="COG0281">
    <property type="taxonomic scope" value="Bacteria"/>
</dbReference>
<dbReference type="HOGENOM" id="CLU_034446_2_1_6"/>
<dbReference type="OrthoDB" id="9805787at2"/>
<dbReference type="Proteomes" id="UP000008707">
    <property type="component" value="Chromosome"/>
</dbReference>
<dbReference type="GO" id="GO:0004473">
    <property type="term" value="F:malate dehydrogenase (decarboxylating) (NADP+) activity"/>
    <property type="evidence" value="ECO:0007669"/>
    <property type="project" value="UniProtKB-EC"/>
</dbReference>
<dbReference type="GO" id="GO:0046872">
    <property type="term" value="F:metal ion binding"/>
    <property type="evidence" value="ECO:0007669"/>
    <property type="project" value="UniProtKB-KW"/>
</dbReference>
<dbReference type="GO" id="GO:0051287">
    <property type="term" value="F:NAD binding"/>
    <property type="evidence" value="ECO:0007669"/>
    <property type="project" value="InterPro"/>
</dbReference>
<dbReference type="GO" id="GO:0008948">
    <property type="term" value="F:oxaloacetate decarboxylase activity"/>
    <property type="evidence" value="ECO:0007669"/>
    <property type="project" value="RHEA"/>
</dbReference>
<dbReference type="CDD" id="cd05311">
    <property type="entry name" value="NAD_bind_2_malic_enz"/>
    <property type="match status" value="1"/>
</dbReference>
<dbReference type="FunFam" id="3.40.50.10380:FF:000003">
    <property type="entry name" value="NADP-dependent malic enzyme"/>
    <property type="match status" value="1"/>
</dbReference>
<dbReference type="FunFam" id="3.40.50.720:FF:000095">
    <property type="entry name" value="NADP-dependent malic enzyme"/>
    <property type="match status" value="1"/>
</dbReference>
<dbReference type="Gene3D" id="3.40.50.10380">
    <property type="entry name" value="Malic enzyme, N-terminal domain"/>
    <property type="match status" value="1"/>
</dbReference>
<dbReference type="Gene3D" id="3.40.50.720">
    <property type="entry name" value="NAD(P)-binding Rossmann-like Domain"/>
    <property type="match status" value="1"/>
</dbReference>
<dbReference type="InterPro" id="IPR046346">
    <property type="entry name" value="Aminoacid_DH-like_N_sf"/>
</dbReference>
<dbReference type="InterPro" id="IPR051674">
    <property type="entry name" value="Malate_Decarboxylase"/>
</dbReference>
<dbReference type="InterPro" id="IPR015884">
    <property type="entry name" value="Malic_enzyme_CS"/>
</dbReference>
<dbReference type="InterPro" id="IPR012301">
    <property type="entry name" value="Malic_N_dom"/>
</dbReference>
<dbReference type="InterPro" id="IPR037062">
    <property type="entry name" value="Malic_N_dom_sf"/>
</dbReference>
<dbReference type="InterPro" id="IPR012302">
    <property type="entry name" value="Malic_NAD-bd"/>
</dbReference>
<dbReference type="InterPro" id="IPR045213">
    <property type="entry name" value="Malic_NAD-bd_bact_type"/>
</dbReference>
<dbReference type="InterPro" id="IPR001891">
    <property type="entry name" value="Malic_OxRdtase"/>
</dbReference>
<dbReference type="InterPro" id="IPR036291">
    <property type="entry name" value="NAD(P)-bd_dom_sf"/>
</dbReference>
<dbReference type="PANTHER" id="PTHR43237">
    <property type="entry name" value="NADP-DEPENDENT MALIC ENZYME"/>
    <property type="match status" value="1"/>
</dbReference>
<dbReference type="PANTHER" id="PTHR43237:SF4">
    <property type="entry name" value="NADP-DEPENDENT MALIC ENZYME"/>
    <property type="match status" value="1"/>
</dbReference>
<dbReference type="Pfam" id="PF00390">
    <property type="entry name" value="malic"/>
    <property type="match status" value="1"/>
</dbReference>
<dbReference type="Pfam" id="PF03949">
    <property type="entry name" value="Malic_M"/>
    <property type="match status" value="1"/>
</dbReference>
<dbReference type="PIRSF" id="PIRSF000106">
    <property type="entry name" value="ME"/>
    <property type="match status" value="1"/>
</dbReference>
<dbReference type="SMART" id="SM01274">
    <property type="entry name" value="malic"/>
    <property type="match status" value="1"/>
</dbReference>
<dbReference type="SMART" id="SM00919">
    <property type="entry name" value="Malic_M"/>
    <property type="match status" value="1"/>
</dbReference>
<dbReference type="SUPFAM" id="SSF53223">
    <property type="entry name" value="Aminoacid dehydrogenase-like, N-terminal domain"/>
    <property type="match status" value="1"/>
</dbReference>
<dbReference type="SUPFAM" id="SSF51735">
    <property type="entry name" value="NAD(P)-binding Rossmann-fold domains"/>
    <property type="match status" value="1"/>
</dbReference>
<dbReference type="PROSITE" id="PS00331">
    <property type="entry name" value="MALIC_ENZYMES"/>
    <property type="match status" value="1"/>
</dbReference>
<reference key="1">
    <citation type="journal article" date="2011" name="Environ. Microbiol.">
        <title>A blueprint of ectoine metabolism from the genome of the industrial producer Halomonas elongata DSM 2581(T).</title>
        <authorList>
            <person name="Schwibbert K."/>
            <person name="Marin-Sanguino A."/>
            <person name="Bagyan I."/>
            <person name="Heidrich G."/>
            <person name="Lentzen G."/>
            <person name="Seitz H."/>
            <person name="Rampp M."/>
            <person name="Schuster S.C."/>
            <person name="Klenk H.P."/>
            <person name="Pfeiffer F."/>
            <person name="Oesterhelt D."/>
            <person name="Kunte H.J."/>
        </authorList>
    </citation>
    <scope>NUCLEOTIDE SEQUENCE [LARGE SCALE GENOMIC DNA]</scope>
    <source>
        <strain>ATCC 33173 / DSM 2581 / NBRC 15536 / NCIMB 2198 / 1H9</strain>
    </source>
</reference>
<reference key="2">
    <citation type="journal article" date="2017" name="PLoS ONE">
        <title>Osmoregulation in the halophilic bacterium Halomonas elongata: a case study for integrative systems biology.</title>
        <authorList>
            <person name="Kindzierski V."/>
            <person name="Raschke S."/>
            <person name="Knabe N."/>
            <person name="Siedler F."/>
            <person name="Scheffer B."/>
            <person name="Pflueger-Grau K."/>
            <person name="Pfeiffer F."/>
            <person name="Oesterhelt D."/>
            <person name="Marin-Sanguino A."/>
            <person name="Kunte H.J."/>
        </authorList>
    </citation>
    <scope>CATALYTIC ACTIVITY</scope>
    <scope>INDUCTION</scope>
    <source>
        <strain>ATCC 33173 / DSM 2581 / NBRC 15536 / NCIMB 2198 / 1H9</strain>
    </source>
</reference>
<proteinExistence type="evidence at protein level"/>
<comment type="catalytic activity">
    <reaction evidence="2">
        <text>(S)-malate + NADP(+) = pyruvate + CO2 + NADPH</text>
        <dbReference type="Rhea" id="RHEA:18253"/>
        <dbReference type="ChEBI" id="CHEBI:15361"/>
        <dbReference type="ChEBI" id="CHEBI:15589"/>
        <dbReference type="ChEBI" id="CHEBI:16526"/>
        <dbReference type="ChEBI" id="CHEBI:57783"/>
        <dbReference type="ChEBI" id="CHEBI:58349"/>
        <dbReference type="EC" id="1.1.1.40"/>
    </reaction>
</comment>
<comment type="catalytic activity">
    <reaction evidence="4">
        <text>oxaloacetate + H(+) = pyruvate + CO2</text>
        <dbReference type="Rhea" id="RHEA:15641"/>
        <dbReference type="ChEBI" id="CHEBI:15361"/>
        <dbReference type="ChEBI" id="CHEBI:15378"/>
        <dbReference type="ChEBI" id="CHEBI:16452"/>
        <dbReference type="ChEBI" id="CHEBI:16526"/>
        <dbReference type="EC" id="1.1.1.40"/>
    </reaction>
</comment>
<comment type="cofactor">
    <cofactor evidence="1">
        <name>Mg(2+)</name>
        <dbReference type="ChEBI" id="CHEBI:18420"/>
    </cofactor>
    <cofactor evidence="1">
        <name>Mn(2+)</name>
        <dbReference type="ChEBI" id="CHEBI:29035"/>
    </cofactor>
    <text evidence="1">Divalent metal cations. Prefers magnesium or manganese.</text>
</comment>
<comment type="induction">
    <text evidence="2">Up-regulated by salt.</text>
</comment>
<comment type="similarity">
    <text evidence="4">Belongs to the malic enzymes family.</text>
</comment>
<protein>
    <recommendedName>
        <fullName evidence="1">NADP-dependent malic enzyme</fullName>
        <shortName evidence="1">NADP-ME</shortName>
        <ecNumber evidence="2">1.1.1.40</ecNumber>
    </recommendedName>
    <alternativeName>
        <fullName evidence="3">Malic enzyme</fullName>
    </alternativeName>
</protein>
<feature type="chain" id="PRO_0000439541" description="NADP-dependent malic enzyme">
    <location>
        <begin position="1"/>
        <end position="422"/>
    </location>
</feature>
<feature type="active site" description="Proton donor" evidence="1">
    <location>
        <position position="39"/>
    </location>
</feature>
<feature type="active site" description="Proton acceptor" evidence="1">
    <location>
        <position position="94"/>
    </location>
</feature>
<feature type="binding site" evidence="1">
    <location>
        <position position="94"/>
    </location>
    <ligand>
        <name>substrate</name>
    </ligand>
</feature>
<feature type="binding site" evidence="1">
    <location>
        <position position="136"/>
    </location>
    <ligand>
        <name>a divalent metal cation</name>
        <dbReference type="ChEBI" id="CHEBI:60240"/>
    </ligand>
</feature>
<feature type="binding site" evidence="1">
    <location>
        <position position="137"/>
    </location>
    <ligand>
        <name>a divalent metal cation</name>
        <dbReference type="ChEBI" id="CHEBI:60240"/>
    </ligand>
</feature>
<feature type="binding site" evidence="1">
    <location>
        <position position="162"/>
    </location>
    <ligand>
        <name>a divalent metal cation</name>
        <dbReference type="ChEBI" id="CHEBI:60240"/>
    </ligand>
</feature>
<feature type="binding site" evidence="1">
    <location>
        <begin position="195"/>
        <end position="198"/>
    </location>
    <ligand>
        <name>NADP(+)</name>
        <dbReference type="ChEBI" id="CHEBI:58349"/>
    </ligand>
</feature>
<feature type="binding site" evidence="1">
    <location>
        <position position="286"/>
    </location>
    <ligand>
        <name>NADP(+)</name>
        <dbReference type="ChEBI" id="CHEBI:58349"/>
    </ligand>
</feature>
<feature type="binding site" evidence="1">
    <location>
        <position position="318"/>
    </location>
    <ligand>
        <name>NADP(+)</name>
        <dbReference type="ChEBI" id="CHEBI:58349"/>
    </ligand>
</feature>
<feature type="binding site" evidence="1">
    <location>
        <position position="318"/>
    </location>
    <ligand>
        <name>substrate</name>
    </ligand>
</feature>
<feature type="site" description="Important for activity" evidence="1">
    <location>
        <position position="162"/>
    </location>
</feature>
<feature type="site" description="Confers specificity for NADP" evidence="1">
    <location>
        <position position="236"/>
    </location>
</feature>
<sequence length="422" mass="45328">MTDAKRQAALDYHAKPIPGKLSVELTKPTATARDLALAYSPGVAEPVREIARDPENAYLYTGKGNLVAVISDGSAILGLGNLGPLASKPVMEGKGVLFKRFAGINSIDVEVDAESPQAFIDTVARIADSWGGINLEDIKAPECFEIERALVEQCNIPVFHDDQHGTAIVTAAGMLNALDIAGKSLESARIVCLGAGAAAIACMKLLVACGARSENLVMLDRKGVIHSGREDLNQYKAMFAIDTDKRTLADAIEGADVFVGLSGPGLMTEEHIRRMADNPVVFACTNPDPEIHPDLARETRPDVIMATGRSDYPNQVNNVLGFPFIFRGALDVRATRINEDMKVAAVHALKDLAREPVPQAVLEAYDKDAMSFGRDYIIPTPIDVRLLERVSSAVAQAAVDSGVARRPYPAHYPLKTVDDVYG</sequence>
<evidence type="ECO:0000250" key="1">
    <source>
        <dbReference type="UniProtKB" id="P40927"/>
    </source>
</evidence>
<evidence type="ECO:0000269" key="2">
    <source>
    </source>
</evidence>
<evidence type="ECO:0000303" key="3">
    <source>
    </source>
</evidence>
<evidence type="ECO:0000305" key="4"/>
<evidence type="ECO:0000312" key="5">
    <source>
        <dbReference type="EMBL" id="CBV43647.1"/>
    </source>
</evidence>
<name>MAEB_HALED</name>
<accession>E1V8J1</accession>